<evidence type="ECO:0000255" key="1">
    <source>
        <dbReference type="HAMAP-Rule" id="MF_03168"/>
    </source>
</evidence>
<organism>
    <name type="scientific">Candida glabrata (strain ATCC 2001 / BCRC 20586 / JCM 3761 / NBRC 0622 / NRRL Y-65 / CBS 138)</name>
    <name type="common">Yeast</name>
    <name type="synonym">Nakaseomyces glabratus</name>
    <dbReference type="NCBI Taxonomy" id="284593"/>
    <lineage>
        <taxon>Eukaryota</taxon>
        <taxon>Fungi</taxon>
        <taxon>Dikarya</taxon>
        <taxon>Ascomycota</taxon>
        <taxon>Saccharomycotina</taxon>
        <taxon>Saccharomycetes</taxon>
        <taxon>Saccharomycetales</taxon>
        <taxon>Saccharomycetaceae</taxon>
        <taxon>Nakaseomyces</taxon>
    </lineage>
</organism>
<dbReference type="EC" id="2.7.4.3" evidence="1"/>
<dbReference type="EMBL" id="CR380957">
    <property type="protein sequence ID" value="CAG61675.1"/>
    <property type="molecule type" value="Genomic_DNA"/>
</dbReference>
<dbReference type="RefSeq" id="XP_448712.1">
    <property type="nucleotide sequence ID" value="XM_448712.1"/>
</dbReference>
<dbReference type="SMR" id="Q6FM32"/>
<dbReference type="FunCoup" id="Q6FM32">
    <property type="interactions" value="861"/>
</dbReference>
<dbReference type="STRING" id="284593.Q6FM32"/>
<dbReference type="EnsemblFungi" id="CAGL0K11418g-T">
    <property type="protein sequence ID" value="CAGL0K11418g-T-p1"/>
    <property type="gene ID" value="CAGL0K11418g"/>
</dbReference>
<dbReference type="GeneID" id="2890071"/>
<dbReference type="KEGG" id="cgr:2890071"/>
<dbReference type="CGD" id="CAL0134425">
    <property type="gene designation" value="ADK1"/>
</dbReference>
<dbReference type="VEuPathDB" id="FungiDB:B1J91_K11418g"/>
<dbReference type="VEuPathDB" id="FungiDB:CAGL0K11418g"/>
<dbReference type="eggNOG" id="KOG3078">
    <property type="taxonomic scope" value="Eukaryota"/>
</dbReference>
<dbReference type="HOGENOM" id="CLU_032354_1_0_1"/>
<dbReference type="InParanoid" id="Q6FM32"/>
<dbReference type="OMA" id="VYHEQTA"/>
<dbReference type="Proteomes" id="UP000002428">
    <property type="component" value="Chromosome K"/>
</dbReference>
<dbReference type="GO" id="GO:0005829">
    <property type="term" value="C:cytosol"/>
    <property type="evidence" value="ECO:0007669"/>
    <property type="project" value="UniProtKB-SubCell"/>
</dbReference>
<dbReference type="GO" id="GO:0005758">
    <property type="term" value="C:mitochondrial intermembrane space"/>
    <property type="evidence" value="ECO:0007669"/>
    <property type="project" value="UniProtKB-SubCell"/>
</dbReference>
<dbReference type="GO" id="GO:0004017">
    <property type="term" value="F:adenylate kinase activity"/>
    <property type="evidence" value="ECO:0007669"/>
    <property type="project" value="UniProtKB-UniRule"/>
</dbReference>
<dbReference type="GO" id="GO:0016208">
    <property type="term" value="F:AMP binding"/>
    <property type="evidence" value="ECO:0007669"/>
    <property type="project" value="EnsemblFungi"/>
</dbReference>
<dbReference type="GO" id="GO:0005524">
    <property type="term" value="F:ATP binding"/>
    <property type="evidence" value="ECO:0007669"/>
    <property type="project" value="UniProtKB-KW"/>
</dbReference>
<dbReference type="GO" id="GO:0003688">
    <property type="term" value="F:DNA replication origin binding"/>
    <property type="evidence" value="ECO:0007669"/>
    <property type="project" value="EnsemblFungi"/>
</dbReference>
<dbReference type="GO" id="GO:0006172">
    <property type="term" value="P:ADP biosynthetic process"/>
    <property type="evidence" value="ECO:0007669"/>
    <property type="project" value="UniProtKB-UniRule"/>
</dbReference>
<dbReference type="GO" id="GO:0046033">
    <property type="term" value="P:AMP metabolic process"/>
    <property type="evidence" value="ECO:0007669"/>
    <property type="project" value="UniProtKB-UniRule"/>
</dbReference>
<dbReference type="GO" id="GO:0046034">
    <property type="term" value="P:ATP metabolic process"/>
    <property type="evidence" value="ECO:0007669"/>
    <property type="project" value="UniProtKB-UniRule"/>
</dbReference>
<dbReference type="GO" id="GO:0006270">
    <property type="term" value="P:DNA replication initiation"/>
    <property type="evidence" value="ECO:0007669"/>
    <property type="project" value="EnsemblFungi"/>
</dbReference>
<dbReference type="GO" id="GO:0036388">
    <property type="term" value="P:pre-replicative complex assembly"/>
    <property type="evidence" value="ECO:0007669"/>
    <property type="project" value="EnsemblFungi"/>
</dbReference>
<dbReference type="CDD" id="cd01428">
    <property type="entry name" value="ADK"/>
    <property type="match status" value="1"/>
</dbReference>
<dbReference type="FunFam" id="3.40.50.300:FF:000106">
    <property type="entry name" value="Adenylate kinase mitochondrial"/>
    <property type="match status" value="1"/>
</dbReference>
<dbReference type="Gene3D" id="3.40.50.300">
    <property type="entry name" value="P-loop containing nucleotide triphosphate hydrolases"/>
    <property type="match status" value="1"/>
</dbReference>
<dbReference type="HAMAP" id="MF_00235">
    <property type="entry name" value="Adenylate_kinase_Adk"/>
    <property type="match status" value="1"/>
</dbReference>
<dbReference type="HAMAP" id="MF_03168">
    <property type="entry name" value="Adenylate_kinase_AK2"/>
    <property type="match status" value="1"/>
</dbReference>
<dbReference type="InterPro" id="IPR006259">
    <property type="entry name" value="Adenyl_kin_sub"/>
</dbReference>
<dbReference type="InterPro" id="IPR000850">
    <property type="entry name" value="Adenylat/UMP-CMP_kin"/>
</dbReference>
<dbReference type="InterPro" id="IPR033690">
    <property type="entry name" value="Adenylat_kinase_CS"/>
</dbReference>
<dbReference type="InterPro" id="IPR007862">
    <property type="entry name" value="Adenylate_kinase_lid-dom"/>
</dbReference>
<dbReference type="InterPro" id="IPR028587">
    <property type="entry name" value="AK2"/>
</dbReference>
<dbReference type="InterPro" id="IPR027417">
    <property type="entry name" value="P-loop_NTPase"/>
</dbReference>
<dbReference type="NCBIfam" id="TIGR01351">
    <property type="entry name" value="adk"/>
    <property type="match status" value="1"/>
</dbReference>
<dbReference type="NCBIfam" id="NF001380">
    <property type="entry name" value="PRK00279.1-2"/>
    <property type="match status" value="1"/>
</dbReference>
<dbReference type="NCBIfam" id="NF001381">
    <property type="entry name" value="PRK00279.1-3"/>
    <property type="match status" value="1"/>
</dbReference>
<dbReference type="NCBIfam" id="NF011100">
    <property type="entry name" value="PRK14527.1"/>
    <property type="match status" value="1"/>
</dbReference>
<dbReference type="PANTHER" id="PTHR23359">
    <property type="entry name" value="NUCLEOTIDE KINASE"/>
    <property type="match status" value="1"/>
</dbReference>
<dbReference type="Pfam" id="PF00406">
    <property type="entry name" value="ADK"/>
    <property type="match status" value="1"/>
</dbReference>
<dbReference type="Pfam" id="PF05191">
    <property type="entry name" value="ADK_lid"/>
    <property type="match status" value="1"/>
</dbReference>
<dbReference type="PRINTS" id="PR00094">
    <property type="entry name" value="ADENYLTKNASE"/>
</dbReference>
<dbReference type="SUPFAM" id="SSF52540">
    <property type="entry name" value="P-loop containing nucleoside triphosphate hydrolases"/>
    <property type="match status" value="1"/>
</dbReference>
<dbReference type="PROSITE" id="PS00113">
    <property type="entry name" value="ADENYLATE_KINASE"/>
    <property type="match status" value="1"/>
</dbReference>
<proteinExistence type="inferred from homology"/>
<accession>Q6FM32</accession>
<protein>
    <recommendedName>
        <fullName evidence="1">Adenylate kinase</fullName>
        <ecNumber evidence="1">2.7.4.3</ecNumber>
    </recommendedName>
    <alternativeName>
        <fullName evidence="1">ATP-AMP transphosphorylase</fullName>
    </alternativeName>
    <alternativeName>
        <fullName evidence="1">ATP:AMP phosphotransferase</fullName>
    </alternativeName>
    <alternativeName>
        <fullName evidence="1">Adenylate kinase cytosolic and mitochondrial</fullName>
    </alternativeName>
    <alternativeName>
        <fullName evidence="1">Adenylate monophosphate kinase</fullName>
    </alternativeName>
</protein>
<sequence length="222" mass="24400">MSSSDSIRMVLIGPPGAGKGTQAPNLVERFHAAHLATGDMLRSQISKGTELGLQAKKIMDQGGLVSDDIMVNMIKDELTNNPACKNGFILDGFPRTIPQAEKLDNMLKERGTPLEKAVELKIDDELLVARITGRLIHPASGRSYHKLFNPPKEDMKDDVTGEPLVQRSDDNEDALKKRLGAYHDQTEPIVDFYKKTGIWADVDASQPPETVWSAILKALGKN</sequence>
<keyword id="KW-0067">ATP-binding</keyword>
<keyword id="KW-0963">Cytoplasm</keyword>
<keyword id="KW-0418">Kinase</keyword>
<keyword id="KW-0496">Mitochondrion</keyword>
<keyword id="KW-0547">Nucleotide-binding</keyword>
<keyword id="KW-1185">Reference proteome</keyword>
<keyword id="KW-0808">Transferase</keyword>
<feature type="chain" id="PRO_0000365668" description="Adenylate kinase">
    <location>
        <begin position="1"/>
        <end position="222"/>
    </location>
</feature>
<feature type="region of interest" description="NMP" evidence="1">
    <location>
        <begin position="36"/>
        <end position="65"/>
    </location>
</feature>
<feature type="region of interest" description="LID" evidence="1">
    <location>
        <begin position="133"/>
        <end position="170"/>
    </location>
</feature>
<feature type="binding site" evidence="1">
    <location>
        <begin position="16"/>
        <end position="21"/>
    </location>
    <ligand>
        <name>ATP</name>
        <dbReference type="ChEBI" id="CHEBI:30616"/>
    </ligand>
</feature>
<feature type="binding site" evidence="1">
    <location>
        <position position="37"/>
    </location>
    <ligand>
        <name>AMP</name>
        <dbReference type="ChEBI" id="CHEBI:456215"/>
    </ligand>
</feature>
<feature type="binding site" evidence="1">
    <location>
        <position position="42"/>
    </location>
    <ligand>
        <name>AMP</name>
        <dbReference type="ChEBI" id="CHEBI:456215"/>
    </ligand>
</feature>
<feature type="binding site" evidence="1">
    <location>
        <begin position="63"/>
        <end position="65"/>
    </location>
    <ligand>
        <name>AMP</name>
        <dbReference type="ChEBI" id="CHEBI:456215"/>
    </ligand>
</feature>
<feature type="binding site" evidence="1">
    <location>
        <begin position="92"/>
        <end position="95"/>
    </location>
    <ligand>
        <name>AMP</name>
        <dbReference type="ChEBI" id="CHEBI:456215"/>
    </ligand>
</feature>
<feature type="binding site" evidence="1">
    <location>
        <position position="99"/>
    </location>
    <ligand>
        <name>AMP</name>
        <dbReference type="ChEBI" id="CHEBI:456215"/>
    </ligand>
</feature>
<feature type="binding site" evidence="1">
    <location>
        <position position="134"/>
    </location>
    <ligand>
        <name>ATP</name>
        <dbReference type="ChEBI" id="CHEBI:30616"/>
    </ligand>
</feature>
<feature type="binding site" evidence="1">
    <location>
        <begin position="143"/>
        <end position="144"/>
    </location>
    <ligand>
        <name>ATP</name>
        <dbReference type="ChEBI" id="CHEBI:30616"/>
    </ligand>
</feature>
<feature type="binding site" evidence="1">
    <location>
        <position position="167"/>
    </location>
    <ligand>
        <name>AMP</name>
        <dbReference type="ChEBI" id="CHEBI:456215"/>
    </ligand>
</feature>
<feature type="binding site" evidence="1">
    <location>
        <position position="178"/>
    </location>
    <ligand>
        <name>AMP</name>
        <dbReference type="ChEBI" id="CHEBI:456215"/>
    </ligand>
</feature>
<feature type="binding site" evidence="1">
    <location>
        <position position="206"/>
    </location>
    <ligand>
        <name>ATP</name>
        <dbReference type="ChEBI" id="CHEBI:30616"/>
    </ligand>
</feature>
<comment type="function">
    <text evidence="1">Catalyzes the reversible transfer of the terminal phosphate group between ATP and AMP. Plays an important role in cellular energy homeostasis and in adenine nucleotide metabolism. Adenylate kinase activity is critical for regulation of the phosphate utilization and the AMP de novo biosynthesis pathways.</text>
</comment>
<comment type="catalytic activity">
    <reaction evidence="1">
        <text>AMP + ATP = 2 ADP</text>
        <dbReference type="Rhea" id="RHEA:12973"/>
        <dbReference type="ChEBI" id="CHEBI:30616"/>
        <dbReference type="ChEBI" id="CHEBI:456215"/>
        <dbReference type="ChEBI" id="CHEBI:456216"/>
        <dbReference type="EC" id="2.7.4.3"/>
    </reaction>
</comment>
<comment type="subunit">
    <text evidence="1">Monomer.</text>
</comment>
<comment type="subcellular location">
    <subcellularLocation>
        <location evidence="1">Cytoplasm</location>
        <location evidence="1">Cytosol</location>
    </subcellularLocation>
    <subcellularLocation>
        <location evidence="1">Mitochondrion intermembrane space</location>
    </subcellularLocation>
    <text evidence="1">Predominantly mitochondrial.</text>
</comment>
<comment type="domain">
    <text evidence="1">Consists of three domains, a large central CORE domain and two small peripheral domains, NMPbind and LID, which undergo movements during catalysis. The LID domain closes over the site of phosphoryl transfer upon ATP binding. Assembling and dissambling the active center during each catalytic cycle provides an effective means to prevent ATP hydrolysis.</text>
</comment>
<comment type="similarity">
    <text evidence="1">Belongs to the adenylate kinase family. AK2 subfamily.</text>
</comment>
<reference key="1">
    <citation type="journal article" date="2004" name="Nature">
        <title>Genome evolution in yeasts.</title>
        <authorList>
            <person name="Dujon B."/>
            <person name="Sherman D."/>
            <person name="Fischer G."/>
            <person name="Durrens P."/>
            <person name="Casaregola S."/>
            <person name="Lafontaine I."/>
            <person name="de Montigny J."/>
            <person name="Marck C."/>
            <person name="Neuveglise C."/>
            <person name="Talla E."/>
            <person name="Goffard N."/>
            <person name="Frangeul L."/>
            <person name="Aigle M."/>
            <person name="Anthouard V."/>
            <person name="Babour A."/>
            <person name="Barbe V."/>
            <person name="Barnay S."/>
            <person name="Blanchin S."/>
            <person name="Beckerich J.-M."/>
            <person name="Beyne E."/>
            <person name="Bleykasten C."/>
            <person name="Boisrame A."/>
            <person name="Boyer J."/>
            <person name="Cattolico L."/>
            <person name="Confanioleri F."/>
            <person name="de Daruvar A."/>
            <person name="Despons L."/>
            <person name="Fabre E."/>
            <person name="Fairhead C."/>
            <person name="Ferry-Dumazet H."/>
            <person name="Groppi A."/>
            <person name="Hantraye F."/>
            <person name="Hennequin C."/>
            <person name="Jauniaux N."/>
            <person name="Joyet P."/>
            <person name="Kachouri R."/>
            <person name="Kerrest A."/>
            <person name="Koszul R."/>
            <person name="Lemaire M."/>
            <person name="Lesur I."/>
            <person name="Ma L."/>
            <person name="Muller H."/>
            <person name="Nicaud J.-M."/>
            <person name="Nikolski M."/>
            <person name="Oztas S."/>
            <person name="Ozier-Kalogeropoulos O."/>
            <person name="Pellenz S."/>
            <person name="Potier S."/>
            <person name="Richard G.-F."/>
            <person name="Straub M.-L."/>
            <person name="Suleau A."/>
            <person name="Swennen D."/>
            <person name="Tekaia F."/>
            <person name="Wesolowski-Louvel M."/>
            <person name="Westhof E."/>
            <person name="Wirth B."/>
            <person name="Zeniou-Meyer M."/>
            <person name="Zivanovic Y."/>
            <person name="Bolotin-Fukuhara M."/>
            <person name="Thierry A."/>
            <person name="Bouchier C."/>
            <person name="Caudron B."/>
            <person name="Scarpelli C."/>
            <person name="Gaillardin C."/>
            <person name="Weissenbach J."/>
            <person name="Wincker P."/>
            <person name="Souciet J.-L."/>
        </authorList>
    </citation>
    <scope>NUCLEOTIDE SEQUENCE [LARGE SCALE GENOMIC DNA]</scope>
    <source>
        <strain>ATCC 2001 / BCRC 20586 / JCM 3761 / NBRC 0622 / NRRL Y-65 / CBS 138</strain>
    </source>
</reference>
<gene>
    <name evidence="1" type="primary">ADK1</name>
    <name type="ordered locus">CAGL0K11418g</name>
</gene>
<name>KAD2_CANGA</name>